<reference key="1">
    <citation type="journal article" date="2004" name="Nat. Genet.">
        <title>Complete sequencing and characterization of 21,243 full-length human cDNAs.</title>
        <authorList>
            <person name="Ota T."/>
            <person name="Suzuki Y."/>
            <person name="Nishikawa T."/>
            <person name="Otsuki T."/>
            <person name="Sugiyama T."/>
            <person name="Irie R."/>
            <person name="Wakamatsu A."/>
            <person name="Hayashi K."/>
            <person name="Sato H."/>
            <person name="Nagai K."/>
            <person name="Kimura K."/>
            <person name="Makita H."/>
            <person name="Sekine M."/>
            <person name="Obayashi M."/>
            <person name="Nishi T."/>
            <person name="Shibahara T."/>
            <person name="Tanaka T."/>
            <person name="Ishii S."/>
            <person name="Yamamoto J."/>
            <person name="Saito K."/>
            <person name="Kawai Y."/>
            <person name="Isono Y."/>
            <person name="Nakamura Y."/>
            <person name="Nagahari K."/>
            <person name="Murakami K."/>
            <person name="Yasuda T."/>
            <person name="Iwayanagi T."/>
            <person name="Wagatsuma M."/>
            <person name="Shiratori A."/>
            <person name="Sudo H."/>
            <person name="Hosoiri T."/>
            <person name="Kaku Y."/>
            <person name="Kodaira H."/>
            <person name="Kondo H."/>
            <person name="Sugawara M."/>
            <person name="Takahashi M."/>
            <person name="Kanda K."/>
            <person name="Yokoi T."/>
            <person name="Furuya T."/>
            <person name="Kikkawa E."/>
            <person name="Omura Y."/>
            <person name="Abe K."/>
            <person name="Kamihara K."/>
            <person name="Katsuta N."/>
            <person name="Sato K."/>
            <person name="Tanikawa M."/>
            <person name="Yamazaki M."/>
            <person name="Ninomiya K."/>
            <person name="Ishibashi T."/>
            <person name="Yamashita H."/>
            <person name="Murakawa K."/>
            <person name="Fujimori K."/>
            <person name="Tanai H."/>
            <person name="Kimata M."/>
            <person name="Watanabe M."/>
            <person name="Hiraoka S."/>
            <person name="Chiba Y."/>
            <person name="Ishida S."/>
            <person name="Ono Y."/>
            <person name="Takiguchi S."/>
            <person name="Watanabe S."/>
            <person name="Yosida M."/>
            <person name="Hotuta T."/>
            <person name="Kusano J."/>
            <person name="Kanehori K."/>
            <person name="Takahashi-Fujii A."/>
            <person name="Hara H."/>
            <person name="Tanase T.-O."/>
            <person name="Nomura Y."/>
            <person name="Togiya S."/>
            <person name="Komai F."/>
            <person name="Hara R."/>
            <person name="Takeuchi K."/>
            <person name="Arita M."/>
            <person name="Imose N."/>
            <person name="Musashino K."/>
            <person name="Yuuki H."/>
            <person name="Oshima A."/>
            <person name="Sasaki N."/>
            <person name="Aotsuka S."/>
            <person name="Yoshikawa Y."/>
            <person name="Matsunawa H."/>
            <person name="Ichihara T."/>
            <person name="Shiohata N."/>
            <person name="Sano S."/>
            <person name="Moriya S."/>
            <person name="Momiyama H."/>
            <person name="Satoh N."/>
            <person name="Takami S."/>
            <person name="Terashima Y."/>
            <person name="Suzuki O."/>
            <person name="Nakagawa S."/>
            <person name="Senoh A."/>
            <person name="Mizoguchi H."/>
            <person name="Goto Y."/>
            <person name="Shimizu F."/>
            <person name="Wakebe H."/>
            <person name="Hishigaki H."/>
            <person name="Watanabe T."/>
            <person name="Sugiyama A."/>
            <person name="Takemoto M."/>
            <person name="Kawakami B."/>
            <person name="Yamazaki M."/>
            <person name="Watanabe K."/>
            <person name="Kumagai A."/>
            <person name="Itakura S."/>
            <person name="Fukuzumi Y."/>
            <person name="Fujimori Y."/>
            <person name="Komiyama M."/>
            <person name="Tashiro H."/>
            <person name="Tanigami A."/>
            <person name="Fujiwara T."/>
            <person name="Ono T."/>
            <person name="Yamada K."/>
            <person name="Fujii Y."/>
            <person name="Ozaki K."/>
            <person name="Hirao M."/>
            <person name="Ohmori Y."/>
            <person name="Kawabata A."/>
            <person name="Hikiji T."/>
            <person name="Kobatake N."/>
            <person name="Inagaki H."/>
            <person name="Ikema Y."/>
            <person name="Okamoto S."/>
            <person name="Okitani R."/>
            <person name="Kawakami T."/>
            <person name="Noguchi S."/>
            <person name="Itoh T."/>
            <person name="Shigeta K."/>
            <person name="Senba T."/>
            <person name="Matsumura K."/>
            <person name="Nakajima Y."/>
            <person name="Mizuno T."/>
            <person name="Morinaga M."/>
            <person name="Sasaki M."/>
            <person name="Togashi T."/>
            <person name="Oyama M."/>
            <person name="Hata H."/>
            <person name="Watanabe M."/>
            <person name="Komatsu T."/>
            <person name="Mizushima-Sugano J."/>
            <person name="Satoh T."/>
            <person name="Shirai Y."/>
            <person name="Takahashi Y."/>
            <person name="Nakagawa K."/>
            <person name="Okumura K."/>
            <person name="Nagase T."/>
            <person name="Nomura N."/>
            <person name="Kikuchi H."/>
            <person name="Masuho Y."/>
            <person name="Yamashita R."/>
            <person name="Nakai K."/>
            <person name="Yada T."/>
            <person name="Nakamura Y."/>
            <person name="Ohara O."/>
            <person name="Isogai T."/>
            <person name="Sugano S."/>
        </authorList>
    </citation>
    <scope>NUCLEOTIDE SEQUENCE [LARGE SCALE MRNA]</scope>
</reference>
<reference key="2">
    <citation type="journal article" date="2003" name="Nature">
        <title>The DNA sequence and analysis of human chromosome 6.</title>
        <authorList>
            <person name="Mungall A.J."/>
            <person name="Palmer S.A."/>
            <person name="Sims S.K."/>
            <person name="Edwards C.A."/>
            <person name="Ashurst J.L."/>
            <person name="Wilming L."/>
            <person name="Jones M.C."/>
            <person name="Horton R."/>
            <person name="Hunt S.E."/>
            <person name="Scott C.E."/>
            <person name="Gilbert J.G.R."/>
            <person name="Clamp M.E."/>
            <person name="Bethel G."/>
            <person name="Milne S."/>
            <person name="Ainscough R."/>
            <person name="Almeida J.P."/>
            <person name="Ambrose K.D."/>
            <person name="Andrews T.D."/>
            <person name="Ashwell R.I.S."/>
            <person name="Babbage A.K."/>
            <person name="Bagguley C.L."/>
            <person name="Bailey J."/>
            <person name="Banerjee R."/>
            <person name="Barker D.J."/>
            <person name="Barlow K.F."/>
            <person name="Bates K."/>
            <person name="Beare D.M."/>
            <person name="Beasley H."/>
            <person name="Beasley O."/>
            <person name="Bird C.P."/>
            <person name="Blakey S.E."/>
            <person name="Bray-Allen S."/>
            <person name="Brook J."/>
            <person name="Brown A.J."/>
            <person name="Brown J.Y."/>
            <person name="Burford D.C."/>
            <person name="Burrill W."/>
            <person name="Burton J."/>
            <person name="Carder C."/>
            <person name="Carter N.P."/>
            <person name="Chapman J.C."/>
            <person name="Clark S.Y."/>
            <person name="Clark G."/>
            <person name="Clee C.M."/>
            <person name="Clegg S."/>
            <person name="Cobley V."/>
            <person name="Collier R.E."/>
            <person name="Collins J.E."/>
            <person name="Colman L.K."/>
            <person name="Corby N.R."/>
            <person name="Coville G.J."/>
            <person name="Culley K.M."/>
            <person name="Dhami P."/>
            <person name="Davies J."/>
            <person name="Dunn M."/>
            <person name="Earthrowl M.E."/>
            <person name="Ellington A.E."/>
            <person name="Evans K.A."/>
            <person name="Faulkner L."/>
            <person name="Francis M.D."/>
            <person name="Frankish A."/>
            <person name="Frankland J."/>
            <person name="French L."/>
            <person name="Garner P."/>
            <person name="Garnett J."/>
            <person name="Ghori M.J."/>
            <person name="Gilby L.M."/>
            <person name="Gillson C.J."/>
            <person name="Glithero R.J."/>
            <person name="Grafham D.V."/>
            <person name="Grant M."/>
            <person name="Gribble S."/>
            <person name="Griffiths C."/>
            <person name="Griffiths M.N.D."/>
            <person name="Hall R."/>
            <person name="Halls K.S."/>
            <person name="Hammond S."/>
            <person name="Harley J.L."/>
            <person name="Hart E.A."/>
            <person name="Heath P.D."/>
            <person name="Heathcott R."/>
            <person name="Holmes S.J."/>
            <person name="Howden P.J."/>
            <person name="Howe K.L."/>
            <person name="Howell G.R."/>
            <person name="Huckle E."/>
            <person name="Humphray S.J."/>
            <person name="Humphries M.D."/>
            <person name="Hunt A.R."/>
            <person name="Johnson C.M."/>
            <person name="Joy A.A."/>
            <person name="Kay M."/>
            <person name="Keenan S.J."/>
            <person name="Kimberley A.M."/>
            <person name="King A."/>
            <person name="Laird G.K."/>
            <person name="Langford C."/>
            <person name="Lawlor S."/>
            <person name="Leongamornlert D.A."/>
            <person name="Leversha M."/>
            <person name="Lloyd C.R."/>
            <person name="Lloyd D.M."/>
            <person name="Loveland J.E."/>
            <person name="Lovell J."/>
            <person name="Martin S."/>
            <person name="Mashreghi-Mohammadi M."/>
            <person name="Maslen G.L."/>
            <person name="Matthews L."/>
            <person name="McCann O.T."/>
            <person name="McLaren S.J."/>
            <person name="McLay K."/>
            <person name="McMurray A."/>
            <person name="Moore M.J.F."/>
            <person name="Mullikin J.C."/>
            <person name="Niblett D."/>
            <person name="Nickerson T."/>
            <person name="Novik K.L."/>
            <person name="Oliver K."/>
            <person name="Overton-Larty E.K."/>
            <person name="Parker A."/>
            <person name="Patel R."/>
            <person name="Pearce A.V."/>
            <person name="Peck A.I."/>
            <person name="Phillimore B.J.C.T."/>
            <person name="Phillips S."/>
            <person name="Plumb R.W."/>
            <person name="Porter K.M."/>
            <person name="Ramsey Y."/>
            <person name="Ranby S.A."/>
            <person name="Rice C.M."/>
            <person name="Ross M.T."/>
            <person name="Searle S.M."/>
            <person name="Sehra H.K."/>
            <person name="Sheridan E."/>
            <person name="Skuce C.D."/>
            <person name="Smith S."/>
            <person name="Smith M."/>
            <person name="Spraggon L."/>
            <person name="Squares S.L."/>
            <person name="Steward C.A."/>
            <person name="Sycamore N."/>
            <person name="Tamlyn-Hall G."/>
            <person name="Tester J."/>
            <person name="Theaker A.J."/>
            <person name="Thomas D.W."/>
            <person name="Thorpe A."/>
            <person name="Tracey A."/>
            <person name="Tromans A."/>
            <person name="Tubby B."/>
            <person name="Wall M."/>
            <person name="Wallis J.M."/>
            <person name="West A.P."/>
            <person name="White S.S."/>
            <person name="Whitehead S.L."/>
            <person name="Whittaker H."/>
            <person name="Wild A."/>
            <person name="Willey D.J."/>
            <person name="Wilmer T.E."/>
            <person name="Wood J.M."/>
            <person name="Wray P.W."/>
            <person name="Wyatt J.C."/>
            <person name="Young L."/>
            <person name="Younger R.M."/>
            <person name="Bentley D.R."/>
            <person name="Coulson A."/>
            <person name="Durbin R.M."/>
            <person name="Hubbard T."/>
            <person name="Sulston J.E."/>
            <person name="Dunham I."/>
            <person name="Rogers J."/>
            <person name="Beck S."/>
        </authorList>
    </citation>
    <scope>NUCLEOTIDE SEQUENCE [LARGE SCALE GENOMIC DNA]</scope>
</reference>
<reference key="3">
    <citation type="submission" date="2005-07" db="EMBL/GenBank/DDBJ databases">
        <authorList>
            <person name="Mural R.J."/>
            <person name="Istrail S."/>
            <person name="Sutton G."/>
            <person name="Florea L."/>
            <person name="Halpern A.L."/>
            <person name="Mobarry C.M."/>
            <person name="Lippert R."/>
            <person name="Walenz B."/>
            <person name="Shatkay H."/>
            <person name="Dew I."/>
            <person name="Miller J.R."/>
            <person name="Flanigan M.J."/>
            <person name="Edwards N.J."/>
            <person name="Bolanos R."/>
            <person name="Fasulo D."/>
            <person name="Halldorsson B.V."/>
            <person name="Hannenhalli S."/>
            <person name="Turner R."/>
            <person name="Yooseph S."/>
            <person name="Lu F."/>
            <person name="Nusskern D.R."/>
            <person name="Shue B.C."/>
            <person name="Zheng X.H."/>
            <person name="Zhong F."/>
            <person name="Delcher A.L."/>
            <person name="Huson D.H."/>
            <person name="Kravitz S.A."/>
            <person name="Mouchard L."/>
            <person name="Reinert K."/>
            <person name="Remington K.A."/>
            <person name="Clark A.G."/>
            <person name="Waterman M.S."/>
            <person name="Eichler E.E."/>
            <person name="Adams M.D."/>
            <person name="Hunkapiller M.W."/>
            <person name="Myers E.W."/>
            <person name="Venter J.C."/>
        </authorList>
    </citation>
    <scope>NUCLEOTIDE SEQUENCE [LARGE SCALE GENOMIC DNA]</scope>
</reference>
<reference key="4">
    <citation type="journal article" date="2004" name="Genome Res.">
        <title>The status, quality, and expansion of the NIH full-length cDNA project: the Mammalian Gene Collection (MGC).</title>
        <authorList>
            <consortium name="The MGC Project Team"/>
        </authorList>
    </citation>
    <scope>NUCLEOTIDE SEQUENCE [LARGE SCALE MRNA]</scope>
    <source>
        <tissue>Eye</tissue>
    </source>
</reference>
<reference key="5">
    <citation type="journal article" date="2008" name="Proc. Natl. Acad. Sci. U.S.A.">
        <title>A quantitative atlas of mitotic phosphorylation.</title>
        <authorList>
            <person name="Dephoure N."/>
            <person name="Zhou C."/>
            <person name="Villen J."/>
            <person name="Beausoleil S.A."/>
            <person name="Bakalarski C.E."/>
            <person name="Elledge S.J."/>
            <person name="Gygi S.P."/>
        </authorList>
    </citation>
    <scope>IDENTIFICATION BY MASS SPECTROMETRY [LARGE SCALE ANALYSIS]</scope>
    <source>
        <tissue>Cervix carcinoma</tissue>
    </source>
</reference>
<reference key="6">
    <citation type="journal article" date="2014" name="Nat. Struct. Mol. Biol.">
        <title>Uncovering global SUMOylation signaling networks in a site-specific manner.</title>
        <authorList>
            <person name="Hendriks I.A."/>
            <person name="D'Souza R.C."/>
            <person name="Yang B."/>
            <person name="Verlaan-de Vries M."/>
            <person name="Mann M."/>
            <person name="Vertegaal A.C."/>
        </authorList>
    </citation>
    <scope>SUMOYLATION [LARGE SCALE ANALYSIS] AT LYS-286</scope>
    <scope>IDENTIFICATION BY MASS SPECTROMETRY [LARGE SCALE ANALYSIS]</scope>
</reference>
<reference key="7">
    <citation type="journal article" date="2014" name="Proc. Natl. Acad. Sci. U.S.A.">
        <title>Mapping of SUMO sites and analysis of SUMOylation changes induced by external stimuli.</title>
        <authorList>
            <person name="Impens F."/>
            <person name="Radoshevich L."/>
            <person name="Cossart P."/>
            <person name="Ribet D."/>
        </authorList>
    </citation>
    <scope>SUMOYLATION [LARGE SCALE ANALYSIS] AT LYS-286</scope>
    <scope>IDENTIFICATION BY MASS SPECTROMETRY [LARGE SCALE ANALYSIS]</scope>
</reference>
<reference key="8">
    <citation type="journal article" date="2015" name="Cell Rep.">
        <title>SUMO-2 orchestrates chromatin modifiers in response to DNA damage.</title>
        <authorList>
            <person name="Hendriks I.A."/>
            <person name="Treffers L.W."/>
            <person name="Verlaan-de Vries M."/>
            <person name="Olsen J.V."/>
            <person name="Vertegaal A.C."/>
        </authorList>
    </citation>
    <scope>SUMOYLATION [LARGE SCALE ANALYSIS] AT LYS-286</scope>
    <scope>IDENTIFICATION BY MASS SPECTROMETRY [LARGE SCALE ANALYSIS]</scope>
</reference>
<reference key="9">
    <citation type="journal article" date="2015" name="Mol. Cell. Proteomics">
        <title>System-wide analysis of SUMOylation dynamics in response to replication stress reveals novel small ubiquitin-like modified target proteins and acceptor lysines relevant for genome stability.</title>
        <authorList>
            <person name="Xiao Z."/>
            <person name="Chang J.G."/>
            <person name="Hendriks I.A."/>
            <person name="Sigurdsson J.O."/>
            <person name="Olsen J.V."/>
            <person name="Vertegaal A.C."/>
        </authorList>
    </citation>
    <scope>SUMOYLATION [LARGE SCALE ANALYSIS] AT LYS-286</scope>
    <scope>IDENTIFICATION BY MASS SPECTROMETRY [LARGE SCALE ANALYSIS]</scope>
</reference>
<reference key="10">
    <citation type="journal article" date="2017" name="Nat. Struct. Mol. Biol.">
        <title>Site-specific mapping of the human SUMO proteome reveals co-modification with phosphorylation.</title>
        <authorList>
            <person name="Hendriks I.A."/>
            <person name="Lyon D."/>
            <person name="Young C."/>
            <person name="Jensen L.J."/>
            <person name="Vertegaal A.C."/>
            <person name="Nielsen M.L."/>
        </authorList>
    </citation>
    <scope>SUMOYLATION [LARGE SCALE ANALYSIS] AT LYS-286; LYS-293; LYS-307 AND LYS-382</scope>
    <scope>IDENTIFICATION BY MASS SPECTROMETRY [LARGE SCALE ANALYSIS]</scope>
</reference>
<dbReference type="EMBL" id="AK122644">
    <property type="protein sequence ID" value="BAG53637.1"/>
    <property type="molecule type" value="mRNA"/>
</dbReference>
<dbReference type="EMBL" id="BX088650">
    <property type="status" value="NOT_ANNOTATED_CDS"/>
    <property type="molecule type" value="Genomic_DNA"/>
</dbReference>
<dbReference type="EMBL" id="CH471081">
    <property type="protein sequence ID" value="EAX03739.1"/>
    <property type="molecule type" value="Genomic_DNA"/>
</dbReference>
<dbReference type="EMBL" id="BC014978">
    <property type="protein sequence ID" value="AAH14978.1"/>
    <property type="molecule type" value="mRNA"/>
</dbReference>
<dbReference type="CCDS" id="CCDS4780.1"/>
<dbReference type="RefSeq" id="NP_689948.1">
    <property type="nucleotide sequence ID" value="NM_152735.4"/>
</dbReference>
<dbReference type="RefSeq" id="XP_047274306.1">
    <property type="nucleotide sequence ID" value="XM_047418350.1"/>
</dbReference>
<dbReference type="RefSeq" id="XP_054187260.1">
    <property type="nucleotide sequence ID" value="XM_054331285.1"/>
</dbReference>
<dbReference type="RefSeq" id="XP_054210572.1">
    <property type="nucleotide sequence ID" value="XM_054354597.1"/>
</dbReference>
<dbReference type="PDB" id="9B9V">
    <property type="method" value="EM"/>
    <property type="resolution" value="8.10 A"/>
    <property type="chains" value="A/B/C/D/E/F/G/H/I/J/K/L/M/N=17-148"/>
</dbReference>
<dbReference type="PDBsum" id="9B9V"/>
<dbReference type="EMDB" id="EMD-44391"/>
<dbReference type="SMR" id="Q96C00"/>
<dbReference type="BioGRID" id="128736">
    <property type="interactions" value="119"/>
</dbReference>
<dbReference type="FunCoup" id="Q96C00">
    <property type="interactions" value="704"/>
</dbReference>
<dbReference type="IntAct" id="Q96C00">
    <property type="interactions" value="91"/>
</dbReference>
<dbReference type="MINT" id="Q96C00"/>
<dbReference type="STRING" id="9606.ENSP00000378503"/>
<dbReference type="ChEMBL" id="CHEMBL5069365"/>
<dbReference type="GlyGen" id="Q96C00">
    <property type="glycosylation" value="2 sites, 1 O-linked glycan (1 site)"/>
</dbReference>
<dbReference type="iPTMnet" id="Q96C00"/>
<dbReference type="PhosphoSitePlus" id="Q96C00"/>
<dbReference type="BioMuta" id="ZBTB9"/>
<dbReference type="DMDM" id="46577533"/>
<dbReference type="jPOST" id="Q96C00"/>
<dbReference type="MassIVE" id="Q96C00"/>
<dbReference type="PaxDb" id="9606-ENSP00000378503"/>
<dbReference type="PeptideAtlas" id="Q96C00"/>
<dbReference type="ProteomicsDB" id="76137"/>
<dbReference type="Pumba" id="Q96C00"/>
<dbReference type="Antibodypedia" id="14338">
    <property type="antibodies" value="95 antibodies from 21 providers"/>
</dbReference>
<dbReference type="DNASU" id="221504"/>
<dbReference type="Ensembl" id="ENST00000395064.3">
    <property type="protein sequence ID" value="ENSP00000378503.2"/>
    <property type="gene ID" value="ENSG00000213588.6"/>
</dbReference>
<dbReference type="Ensembl" id="ENST00000414934.2">
    <property type="protein sequence ID" value="ENSP00000413557.2"/>
    <property type="gene ID" value="ENSG00000236515.3"/>
</dbReference>
<dbReference type="GeneID" id="221504"/>
<dbReference type="KEGG" id="hsa:221504"/>
<dbReference type="MANE-Select" id="ENST00000395064.3">
    <property type="protein sequence ID" value="ENSP00000378503.2"/>
    <property type="RefSeq nucleotide sequence ID" value="NM_152735.4"/>
    <property type="RefSeq protein sequence ID" value="NP_689948.1"/>
</dbReference>
<dbReference type="UCSC" id="uc003oeq.4">
    <property type="organism name" value="human"/>
</dbReference>
<dbReference type="AGR" id="HGNC:28323"/>
<dbReference type="CTD" id="221504"/>
<dbReference type="GeneCards" id="ZBTB9"/>
<dbReference type="HGNC" id="HGNC:28323">
    <property type="gene designation" value="ZBTB9"/>
</dbReference>
<dbReference type="HPA" id="ENSG00000213588">
    <property type="expression patterns" value="Low tissue specificity"/>
</dbReference>
<dbReference type="neXtProt" id="NX_Q96C00"/>
<dbReference type="OpenTargets" id="ENSG00000213588"/>
<dbReference type="PharmGKB" id="PA134895172"/>
<dbReference type="VEuPathDB" id="HostDB:ENSG00000213588"/>
<dbReference type="eggNOG" id="KOG1721">
    <property type="taxonomic scope" value="Eukaryota"/>
</dbReference>
<dbReference type="GeneTree" id="ENSGT00940000162408"/>
<dbReference type="HOGENOM" id="CLU_029118_2_0_1"/>
<dbReference type="InParanoid" id="Q96C00"/>
<dbReference type="OMA" id="PGGWCIR"/>
<dbReference type="OrthoDB" id="6601382at2759"/>
<dbReference type="PAN-GO" id="Q96C00">
    <property type="GO annotations" value="3 GO annotations based on evolutionary models"/>
</dbReference>
<dbReference type="PhylomeDB" id="Q96C00"/>
<dbReference type="PathwayCommons" id="Q96C00"/>
<dbReference type="SignaLink" id="Q96C00"/>
<dbReference type="BioGRID-ORCS" id="221504">
    <property type="hits" value="19 hits in 1189 CRISPR screens"/>
</dbReference>
<dbReference type="GenomeRNAi" id="221504"/>
<dbReference type="Pharos" id="Q96C00">
    <property type="development level" value="Tdark"/>
</dbReference>
<dbReference type="PRO" id="PR:Q96C00"/>
<dbReference type="Proteomes" id="UP000005640">
    <property type="component" value="Chromosome 6"/>
</dbReference>
<dbReference type="RNAct" id="Q96C00">
    <property type="molecule type" value="protein"/>
</dbReference>
<dbReference type="Bgee" id="ENSG00000213588">
    <property type="expression patterns" value="Expressed in primordial germ cell in gonad and 105 other cell types or tissues"/>
</dbReference>
<dbReference type="ExpressionAtlas" id="Q96C00">
    <property type="expression patterns" value="baseline and differential"/>
</dbReference>
<dbReference type="GO" id="GO:0005634">
    <property type="term" value="C:nucleus"/>
    <property type="evidence" value="ECO:0007669"/>
    <property type="project" value="UniProtKB-SubCell"/>
</dbReference>
<dbReference type="GO" id="GO:0000981">
    <property type="term" value="F:DNA-binding transcription factor activity, RNA polymerase II-specific"/>
    <property type="evidence" value="ECO:0000318"/>
    <property type="project" value="GO_Central"/>
</dbReference>
<dbReference type="GO" id="GO:0042802">
    <property type="term" value="F:identical protein binding"/>
    <property type="evidence" value="ECO:0000353"/>
    <property type="project" value="IntAct"/>
</dbReference>
<dbReference type="GO" id="GO:0000978">
    <property type="term" value="F:RNA polymerase II cis-regulatory region sequence-specific DNA binding"/>
    <property type="evidence" value="ECO:0000318"/>
    <property type="project" value="GO_Central"/>
</dbReference>
<dbReference type="GO" id="GO:0008270">
    <property type="term" value="F:zinc ion binding"/>
    <property type="evidence" value="ECO:0007669"/>
    <property type="project" value="UniProtKB-KW"/>
</dbReference>
<dbReference type="GO" id="GO:0006357">
    <property type="term" value="P:regulation of transcription by RNA polymerase II"/>
    <property type="evidence" value="ECO:0000318"/>
    <property type="project" value="GO_Central"/>
</dbReference>
<dbReference type="CDD" id="cd18200">
    <property type="entry name" value="BTB_POZ_ZBTB9"/>
    <property type="match status" value="1"/>
</dbReference>
<dbReference type="FunFam" id="3.30.160.60:FF:000145">
    <property type="entry name" value="Zinc finger protein 574"/>
    <property type="match status" value="1"/>
</dbReference>
<dbReference type="Gene3D" id="3.30.160.60">
    <property type="entry name" value="Classic Zinc Finger"/>
    <property type="match status" value="1"/>
</dbReference>
<dbReference type="Gene3D" id="3.30.710.10">
    <property type="entry name" value="Potassium Channel Kv1.1, Chain A"/>
    <property type="match status" value="1"/>
</dbReference>
<dbReference type="InterPro" id="IPR000210">
    <property type="entry name" value="BTB/POZ_dom"/>
</dbReference>
<dbReference type="InterPro" id="IPR011333">
    <property type="entry name" value="SKP1/BTB/POZ_sf"/>
</dbReference>
<dbReference type="InterPro" id="IPR036236">
    <property type="entry name" value="Znf_C2H2_sf"/>
</dbReference>
<dbReference type="InterPro" id="IPR013087">
    <property type="entry name" value="Znf_C2H2_type"/>
</dbReference>
<dbReference type="InterPro" id="IPR050457">
    <property type="entry name" value="ZnFinger_BTB_dom_contain"/>
</dbReference>
<dbReference type="PANTHER" id="PTHR46105">
    <property type="entry name" value="AGAP004733-PA"/>
    <property type="match status" value="1"/>
</dbReference>
<dbReference type="PANTHER" id="PTHR46105:SF13">
    <property type="entry name" value="ZINC FINGER AND BTB DOMAIN-CONTAINING PROTEIN 9"/>
    <property type="match status" value="1"/>
</dbReference>
<dbReference type="Pfam" id="PF00651">
    <property type="entry name" value="BTB"/>
    <property type="match status" value="1"/>
</dbReference>
<dbReference type="SMART" id="SM00225">
    <property type="entry name" value="BTB"/>
    <property type="match status" value="1"/>
</dbReference>
<dbReference type="SMART" id="SM00355">
    <property type="entry name" value="ZnF_C2H2"/>
    <property type="match status" value="2"/>
</dbReference>
<dbReference type="SUPFAM" id="SSF57667">
    <property type="entry name" value="beta-beta-alpha zinc fingers"/>
    <property type="match status" value="1"/>
</dbReference>
<dbReference type="SUPFAM" id="SSF54695">
    <property type="entry name" value="POZ domain"/>
    <property type="match status" value="1"/>
</dbReference>
<dbReference type="PROSITE" id="PS50097">
    <property type="entry name" value="BTB"/>
    <property type="match status" value="1"/>
</dbReference>
<dbReference type="PROSITE" id="PS00028">
    <property type="entry name" value="ZINC_FINGER_C2H2_1"/>
    <property type="match status" value="1"/>
</dbReference>
<dbReference type="PROSITE" id="PS50157">
    <property type="entry name" value="ZINC_FINGER_C2H2_2"/>
    <property type="match status" value="1"/>
</dbReference>
<protein>
    <recommendedName>
        <fullName>Zinc finger and BTB domain-containing protein 9</fullName>
    </recommendedName>
</protein>
<proteinExistence type="evidence at protein level"/>
<comment type="function">
    <text>May be involved in transcriptional regulation.</text>
</comment>
<comment type="interaction">
    <interactant intactId="EBI-395708">
        <id>Q96C00</id>
    </interactant>
    <interactant intactId="EBI-10213454">
        <id>Q7Z479</id>
        <label>CAPN7</label>
    </interactant>
    <organismsDiffer>false</organismsDiffer>
    <experiments>3</experiments>
</comment>
<comment type="interaction">
    <interactant intactId="EBI-395708">
        <id>Q96C00</id>
    </interactant>
    <interactant intactId="EBI-712912">
        <id>Q9HC52</id>
        <label>CBX8</label>
    </interactant>
    <organismsDiffer>false</organismsDiffer>
    <experiments>3</experiments>
</comment>
<comment type="interaction">
    <interactant intactId="EBI-395708">
        <id>Q96C00</id>
    </interactant>
    <interactant intactId="EBI-8467076">
        <id>Q8N8U2</id>
        <label>CDYL2</label>
    </interactant>
    <organismsDiffer>false</organismsDiffer>
    <experiments>3</experiments>
</comment>
<comment type="interaction">
    <interactant intactId="EBI-395708">
        <id>Q96C00</id>
    </interactant>
    <interactant intactId="EBI-12868028">
        <id>A0PJX0</id>
        <label>CIB4</label>
    </interactant>
    <organismsDiffer>false</organismsDiffer>
    <experiments>3</experiments>
</comment>
<comment type="interaction">
    <interactant intactId="EBI-395708">
        <id>Q96C00</id>
    </interactant>
    <interactant intactId="EBI-456371">
        <id>P61024</id>
        <label>CKS1B</label>
    </interactant>
    <organismsDiffer>false</organismsDiffer>
    <experiments>3</experiments>
</comment>
<comment type="interaction">
    <interactant intactId="EBI-395708">
        <id>Q96C00</id>
    </interactant>
    <interactant intactId="EBI-740402">
        <id>O60941</id>
        <label>DTNB</label>
    </interactant>
    <organismsDiffer>false</organismsDiffer>
    <experiments>5</experiments>
</comment>
<comment type="interaction">
    <interactant intactId="EBI-395708">
        <id>Q96C00</id>
    </interactant>
    <interactant intactId="EBI-749432">
        <id>Q92630</id>
        <label>DYRK2</label>
    </interactant>
    <organismsDiffer>false</organismsDiffer>
    <experiments>3</experiments>
</comment>
<comment type="interaction">
    <interactant intactId="EBI-395708">
        <id>Q96C00</id>
    </interactant>
    <interactant intactId="EBI-2339219">
        <id>Q08426</id>
        <label>EHHADH</label>
    </interactant>
    <organismsDiffer>false</organismsDiffer>
    <experiments>6</experiments>
</comment>
<comment type="interaction">
    <interactant intactId="EBI-395708">
        <id>Q96C00</id>
    </interactant>
    <interactant intactId="EBI-398610">
        <id>O60573</id>
        <label>EIF4E2</label>
    </interactant>
    <organismsDiffer>false</organismsDiffer>
    <experiments>4</experiments>
</comment>
<comment type="interaction">
    <interactant intactId="EBI-395708">
        <id>Q96C00</id>
    </interactant>
    <interactant intactId="EBI-11959885">
        <id>Q07627</id>
        <label>KRTAP1-1</label>
    </interactant>
    <organismsDiffer>false</organismsDiffer>
    <experiments>3</experiments>
</comment>
<comment type="interaction">
    <interactant intactId="EBI-395708">
        <id>Q96C00</id>
    </interactant>
    <interactant intactId="EBI-10172290">
        <id>P60409</id>
        <label>KRTAP10-7</label>
    </interactant>
    <organismsDiffer>false</organismsDiffer>
    <experiments>7</experiments>
</comment>
<comment type="interaction">
    <interactant intactId="EBI-395708">
        <id>Q96C00</id>
    </interactant>
    <interactant intactId="EBI-10172052">
        <id>P60411</id>
        <label>KRTAP10-9</label>
    </interactant>
    <organismsDiffer>false</organismsDiffer>
    <experiments>6</experiments>
</comment>
<comment type="interaction">
    <interactant intactId="EBI-395708">
        <id>Q96C00</id>
    </interactant>
    <interactant intactId="EBI-10176379">
        <id>P59991</id>
        <label>KRTAP12-2</label>
    </interactant>
    <organismsDiffer>false</organismsDiffer>
    <experiments>6</experiments>
</comment>
<comment type="interaction">
    <interactant intactId="EBI-395708">
        <id>Q96C00</id>
    </interactant>
    <interactant intactId="EBI-742828">
        <id>Q14847</id>
        <label>LASP1</label>
    </interactant>
    <organismsDiffer>false</organismsDiffer>
    <experiments>4</experiments>
</comment>
<comment type="interaction">
    <interactant intactId="EBI-395708">
        <id>Q96C00</id>
    </interactant>
    <interactant intactId="EBI-374900">
        <id>Q14566</id>
        <label>MCM6</label>
    </interactant>
    <organismsDiffer>false</organismsDiffer>
    <experiments>3</experiments>
</comment>
<comment type="interaction">
    <interactant intactId="EBI-395708">
        <id>Q96C00</id>
    </interactant>
    <interactant intactId="EBI-724076">
        <id>Q99750</id>
        <label>MDFI</label>
    </interactant>
    <organismsDiffer>false</organismsDiffer>
    <experiments>6</experiments>
</comment>
<comment type="interaction">
    <interactant intactId="EBI-395708">
        <id>Q96C00</id>
    </interactant>
    <interactant intactId="EBI-399246">
        <id>Q9UBU8</id>
        <label>MORF4L1</label>
    </interactant>
    <organismsDiffer>false</organismsDiffer>
    <experiments>4</experiments>
</comment>
<comment type="interaction">
    <interactant intactId="EBI-395708">
        <id>Q96C00</id>
    </interactant>
    <interactant intactId="EBI-10288852">
        <id>Q9UBU8-2</id>
        <label>MORF4L1</label>
    </interactant>
    <organismsDiffer>false</organismsDiffer>
    <experiments>3</experiments>
</comment>
<comment type="interaction">
    <interactant intactId="EBI-395708">
        <id>Q96C00</id>
    </interactant>
    <interactant intactId="EBI-7950997">
        <id>Q96RE7</id>
        <label>NACC1</label>
    </interactant>
    <organismsDiffer>false</organismsDiffer>
    <experiments>2</experiments>
</comment>
<comment type="interaction">
    <interactant intactId="EBI-395708">
        <id>Q96C00</id>
    </interactant>
    <interactant intactId="EBI-714158">
        <id>Q13526</id>
        <label>PIN1</label>
    </interactant>
    <organismsDiffer>false</organismsDiffer>
    <experiments>6</experiments>
</comment>
<comment type="interaction">
    <interactant intactId="EBI-395708">
        <id>Q96C00</id>
    </interactant>
    <interactant intactId="EBI-714599">
        <id>Q9Y237</id>
        <label>PIN4</label>
    </interactant>
    <organismsDiffer>false</organismsDiffer>
    <experiments>4</experiments>
</comment>
<comment type="interaction">
    <interactant intactId="EBI-395708">
        <id>Q96C00</id>
    </interactant>
    <interactant intactId="EBI-749336">
        <id>Q8TAD8</id>
        <label>SNIP1</label>
    </interactant>
    <organismsDiffer>false</organismsDiffer>
    <experiments>6</experiments>
</comment>
<comment type="interaction">
    <interactant intactId="EBI-395708">
        <id>Q96C00</id>
    </interactant>
    <interactant intactId="EBI-747142">
        <id>Q96C24</id>
        <label>SYTL4</label>
    </interactant>
    <organismsDiffer>false</organismsDiffer>
    <experiments>3</experiments>
</comment>
<comment type="interaction">
    <interactant intactId="EBI-395708">
        <id>Q96C00</id>
    </interactant>
    <interactant intactId="EBI-710310">
        <id>Q15560</id>
        <label>TCEA2</label>
    </interactant>
    <organismsDiffer>false</organismsDiffer>
    <experiments>3</experiments>
</comment>
<comment type="interaction">
    <interactant intactId="EBI-395708">
        <id>Q96C00</id>
    </interactant>
    <interactant intactId="EBI-11955057">
        <id>Q8N8B7-2</id>
        <label>TCEANC</label>
    </interactant>
    <organismsDiffer>false</organismsDiffer>
    <experiments>3</experiments>
</comment>
<comment type="interaction">
    <interactant intactId="EBI-395708">
        <id>Q96C00</id>
    </interactant>
    <interactant intactId="EBI-723389">
        <id>Q6FI91</id>
        <label>TSPYL</label>
    </interactant>
    <organismsDiffer>false</organismsDiffer>
    <experiments>3</experiments>
</comment>
<comment type="interaction">
    <interactant intactId="EBI-395708">
        <id>Q96C00</id>
    </interactant>
    <interactant intactId="EBI-746981">
        <id>Q969E8</id>
        <label>TSR2</label>
    </interactant>
    <organismsDiffer>false</organismsDiffer>
    <experiments>6</experiments>
</comment>
<comment type="interaction">
    <interactant intactId="EBI-395708">
        <id>Q96C00</id>
    </interactant>
    <interactant intactId="EBI-10180829">
        <id>Q7KZS0</id>
        <label>UBE2I</label>
    </interactant>
    <organismsDiffer>false</organismsDiffer>
    <experiments>3</experiments>
</comment>
<comment type="interaction">
    <interactant intactId="EBI-395708">
        <id>Q96C00</id>
    </interactant>
    <interactant intactId="EBI-744471">
        <id>O43167</id>
        <label>ZBTB24</label>
    </interactant>
    <organismsDiffer>false</organismsDiffer>
    <experiments>3</experiments>
</comment>
<comment type="interaction">
    <interactant intactId="EBI-395708">
        <id>Q96C00</id>
    </interactant>
    <interactant intactId="EBI-3918996">
        <id>Q9HCK0</id>
        <label>ZBTB26</label>
    </interactant>
    <organismsDiffer>false</organismsDiffer>
    <experiments>3</experiments>
</comment>
<comment type="interaction">
    <interactant intactId="EBI-395708">
        <id>Q96C00</id>
    </interactant>
    <interactant intactId="EBI-744864">
        <id>P10074</id>
        <label>ZBTB48</label>
    </interactant>
    <organismsDiffer>false</organismsDiffer>
    <experiments>3</experiments>
</comment>
<comment type="interaction">
    <interactant intactId="EBI-395708">
        <id>Q96C00</id>
    </interactant>
    <interactant intactId="EBI-395708">
        <id>Q96C00</id>
        <label>ZBTB9</label>
    </interactant>
    <organismsDiffer>false</organismsDiffer>
    <experiments>5</experiments>
</comment>
<comment type="interaction">
    <interactant intactId="EBI-395708">
        <id>Q96C00</id>
    </interactant>
    <interactant intactId="EBI-347633">
        <id>Q9H9D4</id>
        <label>ZNF408</label>
    </interactant>
    <organismsDiffer>false</organismsDiffer>
    <experiments>3</experiments>
</comment>
<comment type="interaction">
    <interactant intactId="EBI-395708">
        <id>Q96C00</id>
    </interactant>
    <interactant intactId="EBI-740727">
        <id>Q8TAU3</id>
        <label>ZNF417</label>
    </interactant>
    <organismsDiffer>false</organismsDiffer>
    <experiments>3</experiments>
</comment>
<comment type="interaction">
    <interactant intactId="EBI-395708">
        <id>Q96C00</id>
    </interactant>
    <interactant intactId="EBI-7138235">
        <id>Q9NQZ8</id>
        <label>ZNF71</label>
    </interactant>
    <organismsDiffer>false</organismsDiffer>
    <experiments>3</experiments>
</comment>
<comment type="subcellular location">
    <subcellularLocation>
        <location evidence="4">Nucleus</location>
    </subcellularLocation>
</comment>
<accession>Q96C00</accession>
<accession>A2AB19</accession>
<sequence>METPTPLPPVPASPTCNPAPRTIQIEFPQHSSSLLESLNRHRLEGKFCDVSLLVQGRELRAHKAVLAAASPYFHDKLLLGDAPRLTLPSVIEADAFEGLLQLIYSGRLRLPLDALPAHLLVASGLQMWQVVDQCSEILRELETSGGGISARGGNSYHALLSTTSSTGGWCIRSSPFQTPVQSSASTESPASTESPVGGEGSELGEVLQIQVEEEEEEEEDDDDEDQGSATLSQTPQPQRVSGVFPRPHGPHPLPMTATPRKLPEGESAPLELPAPPALPPKIFYIKQEPFEPKEEISGSGTQPGGAKEETKVFSGGDTEGNGELGFLLPSGPGPTSGGGGPSWKPVDLHGNEILSGGGGPGGAGQAVHGPVKLGGTPPADGKRFGCLCGKRFAVKPKRDRHIMLTFSLRPFGCGICNKRFKLKHHLTEHMKTHAGALHACPHCGRRFRVHACFLRHRDLCKGQGWATAHWTYK</sequence>
<feature type="chain" id="PRO_0000047723" description="Zinc finger and BTB domain-containing protein 9">
    <location>
        <begin position="1"/>
        <end position="473"/>
    </location>
</feature>
<feature type="domain" description="BTB" evidence="1">
    <location>
        <begin position="48"/>
        <end position="112"/>
    </location>
</feature>
<feature type="zinc finger region" description="C2H2-type 1" evidence="2">
    <location>
        <begin position="411"/>
        <end position="433"/>
    </location>
</feature>
<feature type="zinc finger region" description="C2H2-type 2; atypical" evidence="2">
    <location>
        <begin position="438"/>
        <end position="460"/>
    </location>
</feature>
<feature type="region of interest" description="Disordered" evidence="3">
    <location>
        <begin position="177"/>
        <end position="279"/>
    </location>
</feature>
<feature type="region of interest" description="Disordered" evidence="3">
    <location>
        <begin position="293"/>
        <end position="376"/>
    </location>
</feature>
<feature type="compositionally biased region" description="Low complexity" evidence="3">
    <location>
        <begin position="182"/>
        <end position="196"/>
    </location>
</feature>
<feature type="compositionally biased region" description="Acidic residues" evidence="3">
    <location>
        <begin position="211"/>
        <end position="226"/>
    </location>
</feature>
<feature type="compositionally biased region" description="Polar residues" evidence="3">
    <location>
        <begin position="227"/>
        <end position="239"/>
    </location>
</feature>
<feature type="compositionally biased region" description="Gly residues" evidence="3">
    <location>
        <begin position="355"/>
        <end position="364"/>
    </location>
</feature>
<feature type="cross-link" description="Glycyl lysine isopeptide (Lys-Gly) (interchain with G-Cter in SUMO1); alternate" evidence="5">
    <location>
        <position position="286"/>
    </location>
</feature>
<feature type="cross-link" description="Glycyl lysine isopeptide (Lys-Gly) (interchain with G-Cter in SUMO2); alternate" evidence="6 7 8 9">
    <location>
        <position position="286"/>
    </location>
</feature>
<feature type="cross-link" description="Glycyl lysine isopeptide (Lys-Gly) (interchain with G-Cter in SUMO2)" evidence="9">
    <location>
        <position position="293"/>
    </location>
</feature>
<feature type="cross-link" description="Glycyl lysine isopeptide (Lys-Gly) (interchain with G-Cter in SUMO2)" evidence="9">
    <location>
        <position position="307"/>
    </location>
</feature>
<feature type="cross-link" description="Glycyl lysine isopeptide (Lys-Gly) (interchain with G-Cter in SUMO2)" evidence="9">
    <location>
        <position position="382"/>
    </location>
</feature>
<feature type="sequence variant" id="VAR_061981" description="In dbSNP:rs9469425.">
    <original>A</original>
    <variation>G</variation>
    <location>
        <position position="274"/>
    </location>
</feature>
<gene>
    <name type="primary">ZBTB9</name>
</gene>
<name>ZBTB9_HUMAN</name>
<keyword id="KW-0002">3D-structure</keyword>
<keyword id="KW-0238">DNA-binding</keyword>
<keyword id="KW-1017">Isopeptide bond</keyword>
<keyword id="KW-0479">Metal-binding</keyword>
<keyword id="KW-0539">Nucleus</keyword>
<keyword id="KW-1267">Proteomics identification</keyword>
<keyword id="KW-1185">Reference proteome</keyword>
<keyword id="KW-0677">Repeat</keyword>
<keyword id="KW-0804">Transcription</keyword>
<keyword id="KW-0805">Transcription regulation</keyword>
<keyword id="KW-0832">Ubl conjugation</keyword>
<keyword id="KW-0862">Zinc</keyword>
<keyword id="KW-0863">Zinc-finger</keyword>
<evidence type="ECO:0000255" key="1">
    <source>
        <dbReference type="PROSITE-ProRule" id="PRU00037"/>
    </source>
</evidence>
<evidence type="ECO:0000255" key="2">
    <source>
        <dbReference type="PROSITE-ProRule" id="PRU00042"/>
    </source>
</evidence>
<evidence type="ECO:0000256" key="3">
    <source>
        <dbReference type="SAM" id="MobiDB-lite"/>
    </source>
</evidence>
<evidence type="ECO:0000305" key="4"/>
<evidence type="ECO:0007744" key="5">
    <source>
    </source>
</evidence>
<evidence type="ECO:0007744" key="6">
    <source>
    </source>
</evidence>
<evidence type="ECO:0007744" key="7">
    <source>
    </source>
</evidence>
<evidence type="ECO:0007744" key="8">
    <source>
    </source>
</evidence>
<evidence type="ECO:0007744" key="9">
    <source>
    </source>
</evidence>
<organism>
    <name type="scientific">Homo sapiens</name>
    <name type="common">Human</name>
    <dbReference type="NCBI Taxonomy" id="9606"/>
    <lineage>
        <taxon>Eukaryota</taxon>
        <taxon>Metazoa</taxon>
        <taxon>Chordata</taxon>
        <taxon>Craniata</taxon>
        <taxon>Vertebrata</taxon>
        <taxon>Euteleostomi</taxon>
        <taxon>Mammalia</taxon>
        <taxon>Eutheria</taxon>
        <taxon>Euarchontoglires</taxon>
        <taxon>Primates</taxon>
        <taxon>Haplorrhini</taxon>
        <taxon>Catarrhini</taxon>
        <taxon>Hominidae</taxon>
        <taxon>Homo</taxon>
    </lineage>
</organism>